<name>TRMB_CLOTE</name>
<gene>
    <name evidence="1" type="primary">trmB</name>
    <name type="ordered locus">CTC_00794</name>
</gene>
<proteinExistence type="inferred from homology"/>
<reference key="1">
    <citation type="journal article" date="2003" name="Proc. Natl. Acad. Sci. U.S.A.">
        <title>The genome sequence of Clostridium tetani, the causative agent of tetanus disease.</title>
        <authorList>
            <person name="Brueggemann H."/>
            <person name="Baeumer S."/>
            <person name="Fricke W.F."/>
            <person name="Wiezer A."/>
            <person name="Liesegang H."/>
            <person name="Decker I."/>
            <person name="Herzberg C."/>
            <person name="Martinez-Arias R."/>
            <person name="Merkl R."/>
            <person name="Henne A."/>
            <person name="Gottschalk G."/>
        </authorList>
    </citation>
    <scope>NUCLEOTIDE SEQUENCE [LARGE SCALE GENOMIC DNA]</scope>
    <source>
        <strain>Massachusetts / E88</strain>
    </source>
</reference>
<feature type="chain" id="PRO_0000171321" description="tRNA (guanine-N(7)-)-methyltransferase">
    <location>
        <begin position="1"/>
        <end position="211"/>
    </location>
</feature>
<feature type="region of interest" description="Interaction with RNA" evidence="1">
    <location>
        <begin position="123"/>
        <end position="128"/>
    </location>
</feature>
<feature type="binding site" evidence="1">
    <location>
        <position position="43"/>
    </location>
    <ligand>
        <name>S-adenosyl-L-methionine</name>
        <dbReference type="ChEBI" id="CHEBI:59789"/>
    </ligand>
</feature>
<feature type="binding site" evidence="1">
    <location>
        <position position="68"/>
    </location>
    <ligand>
        <name>S-adenosyl-L-methionine</name>
        <dbReference type="ChEBI" id="CHEBI:59789"/>
    </ligand>
</feature>
<feature type="binding site" evidence="1">
    <location>
        <position position="95"/>
    </location>
    <ligand>
        <name>S-adenosyl-L-methionine</name>
        <dbReference type="ChEBI" id="CHEBI:59789"/>
    </ligand>
</feature>
<feature type="binding site" evidence="1">
    <location>
        <position position="117"/>
    </location>
    <ligand>
        <name>S-adenosyl-L-methionine</name>
        <dbReference type="ChEBI" id="CHEBI:59789"/>
    </ligand>
</feature>
<feature type="binding site" evidence="1">
    <location>
        <position position="121"/>
    </location>
    <ligand>
        <name>substrate</name>
    </ligand>
</feature>
<feature type="binding site" evidence="1">
    <location>
        <position position="153"/>
    </location>
    <ligand>
        <name>substrate</name>
    </ligand>
</feature>
<feature type="binding site" evidence="1">
    <location>
        <begin position="190"/>
        <end position="193"/>
    </location>
    <ligand>
        <name>substrate</name>
    </ligand>
</feature>
<keyword id="KW-0489">Methyltransferase</keyword>
<keyword id="KW-1185">Reference proteome</keyword>
<keyword id="KW-0949">S-adenosyl-L-methionine</keyword>
<keyword id="KW-0808">Transferase</keyword>
<keyword id="KW-0819">tRNA processing</keyword>
<evidence type="ECO:0000255" key="1">
    <source>
        <dbReference type="HAMAP-Rule" id="MF_01057"/>
    </source>
</evidence>
<protein>
    <recommendedName>
        <fullName evidence="1">tRNA (guanine-N(7)-)-methyltransferase</fullName>
        <ecNumber evidence="1">2.1.1.33</ecNumber>
    </recommendedName>
    <alternativeName>
        <fullName evidence="1">tRNA (guanine(46)-N(7))-methyltransferase</fullName>
    </alternativeName>
    <alternativeName>
        <fullName evidence="1">tRNA(m7G46)-methyltransferase</fullName>
    </alternativeName>
</protein>
<accession>Q897E6</accession>
<sequence>MRLRKKWWARPEMEASSLVITNPKEYKGKWMEEFKNNNSIHLELGCGRGGFMQEKALKNPNINYVAVDLKDEILIYVLRKLKEKEIENVRIVPLNIAFISEVFEKDEIEKIYINFCNPWPKLRHNKRRLTHNKFLDEYKKFLKGQGEIWFKTDDIGLFEDSQEYFKESGFSIEYITYDLHKSDFKDNIMTEYETKFTSMGMKTMFLIAKLK</sequence>
<organism>
    <name type="scientific">Clostridium tetani (strain Massachusetts / E88)</name>
    <dbReference type="NCBI Taxonomy" id="212717"/>
    <lineage>
        <taxon>Bacteria</taxon>
        <taxon>Bacillati</taxon>
        <taxon>Bacillota</taxon>
        <taxon>Clostridia</taxon>
        <taxon>Eubacteriales</taxon>
        <taxon>Clostridiaceae</taxon>
        <taxon>Clostridium</taxon>
    </lineage>
</organism>
<dbReference type="EC" id="2.1.1.33" evidence="1"/>
<dbReference type="EMBL" id="AE015927">
    <property type="protein sequence ID" value="AAO35392.1"/>
    <property type="molecule type" value="Genomic_DNA"/>
</dbReference>
<dbReference type="RefSeq" id="WP_011099056.1">
    <property type="nucleotide sequence ID" value="NC_004557.1"/>
</dbReference>
<dbReference type="SMR" id="Q897E6"/>
<dbReference type="STRING" id="212717.CTC_00794"/>
<dbReference type="GeneID" id="24254212"/>
<dbReference type="KEGG" id="ctc:CTC_00794"/>
<dbReference type="HOGENOM" id="CLU_050910_2_1_9"/>
<dbReference type="OrthoDB" id="9802090at2"/>
<dbReference type="UniPathway" id="UPA00989"/>
<dbReference type="Proteomes" id="UP000001412">
    <property type="component" value="Chromosome"/>
</dbReference>
<dbReference type="GO" id="GO:0043527">
    <property type="term" value="C:tRNA methyltransferase complex"/>
    <property type="evidence" value="ECO:0007669"/>
    <property type="project" value="TreeGrafter"/>
</dbReference>
<dbReference type="GO" id="GO:0008176">
    <property type="term" value="F:tRNA (guanine(46)-N7)-methyltransferase activity"/>
    <property type="evidence" value="ECO:0007669"/>
    <property type="project" value="UniProtKB-UniRule"/>
</dbReference>
<dbReference type="CDD" id="cd02440">
    <property type="entry name" value="AdoMet_MTases"/>
    <property type="match status" value="1"/>
</dbReference>
<dbReference type="Gene3D" id="3.40.50.150">
    <property type="entry name" value="Vaccinia Virus protein VP39"/>
    <property type="match status" value="1"/>
</dbReference>
<dbReference type="HAMAP" id="MF_01057">
    <property type="entry name" value="tRNA_methyltr_TrmB"/>
    <property type="match status" value="1"/>
</dbReference>
<dbReference type="InterPro" id="IPR029063">
    <property type="entry name" value="SAM-dependent_MTases_sf"/>
</dbReference>
<dbReference type="InterPro" id="IPR003358">
    <property type="entry name" value="tRNA_(Gua-N-7)_MeTrfase_Trmb"/>
</dbReference>
<dbReference type="InterPro" id="IPR055361">
    <property type="entry name" value="tRNA_methyltr_TrmB_bact"/>
</dbReference>
<dbReference type="NCBIfam" id="NF001080">
    <property type="entry name" value="PRK00121.2-2"/>
    <property type="match status" value="1"/>
</dbReference>
<dbReference type="NCBIfam" id="TIGR00091">
    <property type="entry name" value="tRNA (guanosine(46)-N7)-methyltransferase TrmB"/>
    <property type="match status" value="1"/>
</dbReference>
<dbReference type="PANTHER" id="PTHR23417">
    <property type="entry name" value="3-DEOXY-D-MANNO-OCTULOSONIC-ACID TRANSFERASE/TRNA GUANINE-N 7 - -METHYLTRANSFERASE"/>
    <property type="match status" value="1"/>
</dbReference>
<dbReference type="PANTHER" id="PTHR23417:SF14">
    <property type="entry name" value="PENTACOTRIPEPTIDE-REPEAT REGION OF PRORP DOMAIN-CONTAINING PROTEIN"/>
    <property type="match status" value="1"/>
</dbReference>
<dbReference type="Pfam" id="PF02390">
    <property type="entry name" value="Methyltransf_4"/>
    <property type="match status" value="1"/>
</dbReference>
<dbReference type="SUPFAM" id="SSF53335">
    <property type="entry name" value="S-adenosyl-L-methionine-dependent methyltransferases"/>
    <property type="match status" value="1"/>
</dbReference>
<dbReference type="PROSITE" id="PS51625">
    <property type="entry name" value="SAM_MT_TRMB"/>
    <property type="match status" value="1"/>
</dbReference>
<comment type="function">
    <text evidence="1">Catalyzes the formation of N(7)-methylguanine at position 46 (m7G46) in tRNA.</text>
</comment>
<comment type="catalytic activity">
    <reaction evidence="1">
        <text>guanosine(46) in tRNA + S-adenosyl-L-methionine = N(7)-methylguanosine(46) in tRNA + S-adenosyl-L-homocysteine</text>
        <dbReference type="Rhea" id="RHEA:42708"/>
        <dbReference type="Rhea" id="RHEA-COMP:10188"/>
        <dbReference type="Rhea" id="RHEA-COMP:10189"/>
        <dbReference type="ChEBI" id="CHEBI:57856"/>
        <dbReference type="ChEBI" id="CHEBI:59789"/>
        <dbReference type="ChEBI" id="CHEBI:74269"/>
        <dbReference type="ChEBI" id="CHEBI:74480"/>
        <dbReference type="EC" id="2.1.1.33"/>
    </reaction>
</comment>
<comment type="pathway">
    <text evidence="1">tRNA modification; N(7)-methylguanine-tRNA biosynthesis.</text>
</comment>
<comment type="similarity">
    <text evidence="1">Belongs to the class I-like SAM-binding methyltransferase superfamily. TrmB family.</text>
</comment>